<reference key="1">
    <citation type="journal article" date="2004" name="Nature">
        <title>Genome evolution in yeasts.</title>
        <authorList>
            <person name="Dujon B."/>
            <person name="Sherman D."/>
            <person name="Fischer G."/>
            <person name="Durrens P."/>
            <person name="Casaregola S."/>
            <person name="Lafontaine I."/>
            <person name="de Montigny J."/>
            <person name="Marck C."/>
            <person name="Neuveglise C."/>
            <person name="Talla E."/>
            <person name="Goffard N."/>
            <person name="Frangeul L."/>
            <person name="Aigle M."/>
            <person name="Anthouard V."/>
            <person name="Babour A."/>
            <person name="Barbe V."/>
            <person name="Barnay S."/>
            <person name="Blanchin S."/>
            <person name="Beckerich J.-M."/>
            <person name="Beyne E."/>
            <person name="Bleykasten C."/>
            <person name="Boisrame A."/>
            <person name="Boyer J."/>
            <person name="Cattolico L."/>
            <person name="Confanioleri F."/>
            <person name="de Daruvar A."/>
            <person name="Despons L."/>
            <person name="Fabre E."/>
            <person name="Fairhead C."/>
            <person name="Ferry-Dumazet H."/>
            <person name="Groppi A."/>
            <person name="Hantraye F."/>
            <person name="Hennequin C."/>
            <person name="Jauniaux N."/>
            <person name="Joyet P."/>
            <person name="Kachouri R."/>
            <person name="Kerrest A."/>
            <person name="Koszul R."/>
            <person name="Lemaire M."/>
            <person name="Lesur I."/>
            <person name="Ma L."/>
            <person name="Muller H."/>
            <person name="Nicaud J.-M."/>
            <person name="Nikolski M."/>
            <person name="Oztas S."/>
            <person name="Ozier-Kalogeropoulos O."/>
            <person name="Pellenz S."/>
            <person name="Potier S."/>
            <person name="Richard G.-F."/>
            <person name="Straub M.-L."/>
            <person name="Suleau A."/>
            <person name="Swennen D."/>
            <person name="Tekaia F."/>
            <person name="Wesolowski-Louvel M."/>
            <person name="Westhof E."/>
            <person name="Wirth B."/>
            <person name="Zeniou-Meyer M."/>
            <person name="Zivanovic Y."/>
            <person name="Bolotin-Fukuhara M."/>
            <person name="Thierry A."/>
            <person name="Bouchier C."/>
            <person name="Caudron B."/>
            <person name="Scarpelli C."/>
            <person name="Gaillardin C."/>
            <person name="Weissenbach J."/>
            <person name="Wincker P."/>
            <person name="Souciet J.-L."/>
        </authorList>
    </citation>
    <scope>NUCLEOTIDE SEQUENCE [LARGE SCALE GENOMIC DNA]</scope>
    <source>
        <strain>ATCC 2001 / BCRC 20586 / JCM 3761 / NBRC 0622 / NRRL Y-65 / CBS 138</strain>
    </source>
</reference>
<organism>
    <name type="scientific">Candida glabrata (strain ATCC 2001 / BCRC 20586 / JCM 3761 / NBRC 0622 / NRRL Y-65 / CBS 138)</name>
    <name type="common">Yeast</name>
    <name type="synonym">Nakaseomyces glabratus</name>
    <dbReference type="NCBI Taxonomy" id="284593"/>
    <lineage>
        <taxon>Eukaryota</taxon>
        <taxon>Fungi</taxon>
        <taxon>Dikarya</taxon>
        <taxon>Ascomycota</taxon>
        <taxon>Saccharomycotina</taxon>
        <taxon>Saccharomycetes</taxon>
        <taxon>Saccharomycetales</taxon>
        <taxon>Saccharomycetaceae</taxon>
        <taxon>Nakaseomyces</taxon>
    </lineage>
</organism>
<evidence type="ECO:0000250" key="1"/>
<evidence type="ECO:0000256" key="2">
    <source>
        <dbReference type="SAM" id="MobiDB-lite"/>
    </source>
</evidence>
<evidence type="ECO:0000305" key="3"/>
<name>ALB1_CANGA</name>
<protein>
    <recommendedName>
        <fullName>Ribosome biogenesis protein ALB1</fullName>
    </recommendedName>
</protein>
<sequence>MPSRNSINRPKLTVNLNRKNSSISKKRDQRERAGLLQPARSSADSKSGKVKSVPLDLYFEGQKDDHASAKGITNKTLSKKRAKKIERNIKYAQQRRLLTDATAKLEADMEIDIDQKKTKDAKPKTALEQVKEALWNAVEDTSNSGLIIENGQGTVLGGPYFP</sequence>
<keyword id="KW-0963">Cytoplasm</keyword>
<keyword id="KW-0539">Nucleus</keyword>
<keyword id="KW-1185">Reference proteome</keyword>
<keyword id="KW-0690">Ribosome biogenesis</keyword>
<keyword id="KW-0813">Transport</keyword>
<feature type="chain" id="PRO_0000333327" description="Ribosome biogenesis protein ALB1">
    <location>
        <begin position="1"/>
        <end position="162"/>
    </location>
</feature>
<feature type="region of interest" description="Disordered" evidence="2">
    <location>
        <begin position="1"/>
        <end position="50"/>
    </location>
</feature>
<feature type="compositionally biased region" description="Polar residues" evidence="2">
    <location>
        <begin position="1"/>
        <end position="23"/>
    </location>
</feature>
<accession>Q6FL80</accession>
<gene>
    <name type="primary">ALB1</name>
    <name type="ordered locus">CAGL0L05500g</name>
</gene>
<dbReference type="EMBL" id="CR380958">
    <property type="protein sequence ID" value="CAG61984.1"/>
    <property type="molecule type" value="Genomic_DNA"/>
</dbReference>
<dbReference type="RefSeq" id="XP_449014.1">
    <property type="nucleotide sequence ID" value="XM_449014.1"/>
</dbReference>
<dbReference type="SMR" id="Q6FL80"/>
<dbReference type="FunCoup" id="Q6FL80">
    <property type="interactions" value="264"/>
</dbReference>
<dbReference type="STRING" id="284593.Q6FL80"/>
<dbReference type="EnsemblFungi" id="CAGL0L05500g-T">
    <property type="protein sequence ID" value="CAGL0L05500g-T-p1"/>
    <property type="gene ID" value="CAGL0L05500g"/>
</dbReference>
<dbReference type="KEGG" id="cgr:2890793"/>
<dbReference type="CGD" id="CAL0136060">
    <property type="gene designation" value="CAGL0L05500g"/>
</dbReference>
<dbReference type="VEuPathDB" id="FungiDB:B1J91_L05500g"/>
<dbReference type="VEuPathDB" id="FungiDB:CAGL0L05500g"/>
<dbReference type="eggNOG" id="ENOG502S14D">
    <property type="taxonomic scope" value="Eukaryota"/>
</dbReference>
<dbReference type="HOGENOM" id="CLU_103824_0_0_1"/>
<dbReference type="InParanoid" id="Q6FL80"/>
<dbReference type="OMA" id="HHKVHSL"/>
<dbReference type="Proteomes" id="UP000002428">
    <property type="component" value="Chromosome L"/>
</dbReference>
<dbReference type="GO" id="GO:0005737">
    <property type="term" value="C:cytoplasm"/>
    <property type="evidence" value="ECO:0007669"/>
    <property type="project" value="UniProtKB-SubCell"/>
</dbReference>
<dbReference type="GO" id="GO:0005634">
    <property type="term" value="C:nucleus"/>
    <property type="evidence" value="ECO:0007669"/>
    <property type="project" value="UniProtKB-SubCell"/>
</dbReference>
<dbReference type="GO" id="GO:0042273">
    <property type="term" value="P:ribosomal large subunit biogenesis"/>
    <property type="evidence" value="ECO:0007669"/>
    <property type="project" value="EnsemblFungi"/>
</dbReference>
<dbReference type="InterPro" id="IPR022784">
    <property type="entry name" value="Ribosome_bgen_Alb1"/>
</dbReference>
<dbReference type="Pfam" id="PF09135">
    <property type="entry name" value="Alb1"/>
    <property type="match status" value="1"/>
</dbReference>
<proteinExistence type="inferred from homology"/>
<comment type="function">
    <text evidence="1">Involved in proper assembly of pre-ribosomal particles during the biogenesis of the 60S ribosomal subunit. Accompanies the pre-60S particles to the cytoplasm (By similarity).</text>
</comment>
<comment type="subunit">
    <text evidence="1">Component of the nucleoplasmic and cytoplasmic pre-60S ribosomal particles.</text>
</comment>
<comment type="subcellular location">
    <subcellularLocation>
        <location evidence="1">Cytoplasm</location>
    </subcellularLocation>
    <subcellularLocation>
        <location evidence="1">Nucleus</location>
    </subcellularLocation>
</comment>
<comment type="similarity">
    <text evidence="3">Belongs to the ALB1 family.</text>
</comment>